<feature type="signal peptide" evidence="1">
    <location>
        <begin position="1"/>
        <end position="20"/>
    </location>
</feature>
<feature type="chain" id="PRO_5000205375" description="Flagellar P-ring protein">
    <location>
        <begin position="21"/>
        <end position="363"/>
    </location>
</feature>
<gene>
    <name evidence="1" type="primary">flgI</name>
    <name type="ordered locus">Sama_2311</name>
</gene>
<evidence type="ECO:0000255" key="1">
    <source>
        <dbReference type="HAMAP-Rule" id="MF_00416"/>
    </source>
</evidence>
<comment type="function">
    <text evidence="1">Assembles around the rod to form the L-ring and probably protects the motor/basal body from shearing forces during rotation.</text>
</comment>
<comment type="subunit">
    <text evidence="1">The basal body constitutes a major portion of the flagellar organelle and consists of four rings (L,P,S, and M) mounted on a central rod.</text>
</comment>
<comment type="subcellular location">
    <subcellularLocation>
        <location evidence="1">Periplasm</location>
    </subcellularLocation>
    <subcellularLocation>
        <location evidence="1">Bacterial flagellum basal body</location>
    </subcellularLocation>
</comment>
<comment type="similarity">
    <text evidence="1">Belongs to the FlgI family.</text>
</comment>
<proteinExistence type="inferred from homology"/>
<reference key="1">
    <citation type="submission" date="2006-12" db="EMBL/GenBank/DDBJ databases">
        <title>Complete sequence of Shewanella amazonensis SB2B.</title>
        <authorList>
            <consortium name="US DOE Joint Genome Institute"/>
            <person name="Copeland A."/>
            <person name="Lucas S."/>
            <person name="Lapidus A."/>
            <person name="Barry K."/>
            <person name="Detter J.C."/>
            <person name="Glavina del Rio T."/>
            <person name="Hammon N."/>
            <person name="Israni S."/>
            <person name="Dalin E."/>
            <person name="Tice H."/>
            <person name="Pitluck S."/>
            <person name="Munk A.C."/>
            <person name="Brettin T."/>
            <person name="Bruce D."/>
            <person name="Han C."/>
            <person name="Tapia R."/>
            <person name="Gilna P."/>
            <person name="Schmutz J."/>
            <person name="Larimer F."/>
            <person name="Land M."/>
            <person name="Hauser L."/>
            <person name="Kyrpides N."/>
            <person name="Mikhailova N."/>
            <person name="Fredrickson J."/>
            <person name="Richardson P."/>
        </authorList>
    </citation>
    <scope>NUCLEOTIDE SEQUENCE [LARGE SCALE GENOMIC DNA]</scope>
    <source>
        <strain>ATCC BAA-1098 / SB2B</strain>
    </source>
</reference>
<dbReference type="EMBL" id="CP000507">
    <property type="protein sequence ID" value="ABM00517.1"/>
    <property type="molecule type" value="Genomic_DNA"/>
</dbReference>
<dbReference type="RefSeq" id="WP_011760424.1">
    <property type="nucleotide sequence ID" value="NC_008700.1"/>
</dbReference>
<dbReference type="SMR" id="A1S810"/>
<dbReference type="STRING" id="326297.Sama_2311"/>
<dbReference type="KEGG" id="saz:Sama_2311"/>
<dbReference type="eggNOG" id="COG1706">
    <property type="taxonomic scope" value="Bacteria"/>
</dbReference>
<dbReference type="HOGENOM" id="CLU_045235_1_0_6"/>
<dbReference type="OrthoDB" id="9786431at2"/>
<dbReference type="Proteomes" id="UP000009175">
    <property type="component" value="Chromosome"/>
</dbReference>
<dbReference type="GO" id="GO:0009428">
    <property type="term" value="C:bacterial-type flagellum basal body, distal rod, P ring"/>
    <property type="evidence" value="ECO:0007669"/>
    <property type="project" value="InterPro"/>
</dbReference>
<dbReference type="GO" id="GO:0030288">
    <property type="term" value="C:outer membrane-bounded periplasmic space"/>
    <property type="evidence" value="ECO:0007669"/>
    <property type="project" value="InterPro"/>
</dbReference>
<dbReference type="GO" id="GO:0005198">
    <property type="term" value="F:structural molecule activity"/>
    <property type="evidence" value="ECO:0007669"/>
    <property type="project" value="InterPro"/>
</dbReference>
<dbReference type="GO" id="GO:0071973">
    <property type="term" value="P:bacterial-type flagellum-dependent cell motility"/>
    <property type="evidence" value="ECO:0007669"/>
    <property type="project" value="InterPro"/>
</dbReference>
<dbReference type="HAMAP" id="MF_00416">
    <property type="entry name" value="FlgI"/>
    <property type="match status" value="1"/>
</dbReference>
<dbReference type="InterPro" id="IPR001782">
    <property type="entry name" value="Flag_FlgI"/>
</dbReference>
<dbReference type="NCBIfam" id="NF003676">
    <property type="entry name" value="PRK05303.1"/>
    <property type="match status" value="1"/>
</dbReference>
<dbReference type="PANTHER" id="PTHR30381">
    <property type="entry name" value="FLAGELLAR P-RING PERIPLASMIC PROTEIN FLGI"/>
    <property type="match status" value="1"/>
</dbReference>
<dbReference type="PANTHER" id="PTHR30381:SF0">
    <property type="entry name" value="FLAGELLAR P-RING PROTEIN"/>
    <property type="match status" value="1"/>
</dbReference>
<dbReference type="Pfam" id="PF02119">
    <property type="entry name" value="FlgI"/>
    <property type="match status" value="1"/>
</dbReference>
<dbReference type="PRINTS" id="PR01010">
    <property type="entry name" value="FLGPRINGFLGI"/>
</dbReference>
<keyword id="KW-0975">Bacterial flagellum</keyword>
<keyword id="KW-0574">Periplasm</keyword>
<keyword id="KW-1185">Reference proteome</keyword>
<keyword id="KW-0732">Signal</keyword>
<sequence length="363" mass="37970">MKIKVLLAVALLAMTVPVKAERIKDIAAVQGVRSNQLIGYGLVVGLPGTGEKANYTEQTFTTMLKNFGINLPTNVKPKIKNVAVVAVHADMPPFIKPGQTLDVTVSSIGEAKSLRGGTLLQTFLKGVDGNIYAIAQGSMVVSGFSAEGLDGSKVIQNTPTVGRIPNGALVERAVPSAFAHGDFLTFNLHRADFSTAKRMADAINDLLGPEMARALDAASVQVYAPRDASQRVSFLATLENVEVEPADESAKVIVNSRTGTIVVGQNVKLLPAAVTHGGLTVTIAENQQVSQPNALAGGDTVVTNQSTIDASQANSRMFLFNPGTSLDELVRAVNLVGAAPSDVLAILEALKMAGALHGELIVI</sequence>
<name>FLGI_SHEAM</name>
<organism>
    <name type="scientific">Shewanella amazonensis (strain ATCC BAA-1098 / SB2B)</name>
    <dbReference type="NCBI Taxonomy" id="326297"/>
    <lineage>
        <taxon>Bacteria</taxon>
        <taxon>Pseudomonadati</taxon>
        <taxon>Pseudomonadota</taxon>
        <taxon>Gammaproteobacteria</taxon>
        <taxon>Alteromonadales</taxon>
        <taxon>Shewanellaceae</taxon>
        <taxon>Shewanella</taxon>
    </lineage>
</organism>
<protein>
    <recommendedName>
        <fullName evidence="1">Flagellar P-ring protein</fullName>
    </recommendedName>
    <alternativeName>
        <fullName evidence="1">Basal body P-ring protein</fullName>
    </alternativeName>
</protein>
<accession>A1S810</accession>